<organism>
    <name type="scientific">Desulfovibrio desulfuricans</name>
    <dbReference type="NCBI Taxonomy" id="876"/>
    <lineage>
        <taxon>Bacteria</taxon>
        <taxon>Pseudomonadati</taxon>
        <taxon>Thermodesulfobacteriota</taxon>
        <taxon>Desulfovibrionia</taxon>
        <taxon>Desulfovibrionales</taxon>
        <taxon>Desulfovibrionaceae</taxon>
        <taxon>Desulfovibrio</taxon>
    </lineage>
</organism>
<gene>
    <name type="primary">sodA</name>
</gene>
<reference key="1">
    <citation type="journal article" date="1977" name="FEBS Lett.">
        <title>The N-terminal sequence of superoxide dismutase from the strict anaerobe Desulfovibrio desulfuricans.</title>
        <authorList>
            <person name="Bruschi M."/>
            <person name="Hatchikian C."/>
            <person name="Bonicel J."/>
            <person name="Bovier-Lapierre G.E."/>
            <person name="Couchoud P."/>
        </authorList>
    </citation>
    <scope>PROTEIN SEQUENCE</scope>
</reference>
<name>SODM_DESDE</name>
<accession>P11419</accession>
<dbReference type="EC" id="1.15.1.1"/>
<dbReference type="PIR" id="A12968">
    <property type="entry name" value="A12968"/>
</dbReference>
<dbReference type="SMR" id="P11419"/>
<dbReference type="GO" id="GO:0046872">
    <property type="term" value="F:metal ion binding"/>
    <property type="evidence" value="ECO:0007669"/>
    <property type="project" value="UniProtKB-KW"/>
</dbReference>
<dbReference type="GO" id="GO:0004784">
    <property type="term" value="F:superoxide dismutase activity"/>
    <property type="evidence" value="ECO:0007669"/>
    <property type="project" value="UniProtKB-EC"/>
</dbReference>
<proteinExistence type="evidence at protein level"/>
<comment type="function">
    <text>Destroys superoxide anion radicals which are normally produced within the cells and which are toxic to biological systems.</text>
</comment>
<comment type="catalytic activity">
    <reaction>
        <text>2 superoxide + 2 H(+) = H2O2 + O2</text>
        <dbReference type="Rhea" id="RHEA:20696"/>
        <dbReference type="ChEBI" id="CHEBI:15378"/>
        <dbReference type="ChEBI" id="CHEBI:15379"/>
        <dbReference type="ChEBI" id="CHEBI:16240"/>
        <dbReference type="ChEBI" id="CHEBI:18421"/>
        <dbReference type="EC" id="1.15.1.1"/>
    </reaction>
</comment>
<comment type="cofactor">
    <cofactor evidence="1">
        <name>Mn(2+)</name>
        <dbReference type="ChEBI" id="CHEBI:29035"/>
    </cofactor>
    <text evidence="1">Binds 1 Mn(2+) ion per subunit.</text>
</comment>
<comment type="subunit">
    <text>Homodimer.</text>
</comment>
<comment type="similarity">
    <text evidence="2">Belongs to the iron/manganese superoxide dismutase family.</text>
</comment>
<keyword id="KW-0903">Direct protein sequencing</keyword>
<keyword id="KW-0464">Manganese</keyword>
<keyword id="KW-0479">Metal-binding</keyword>
<keyword id="KW-0560">Oxidoreductase</keyword>
<feature type="chain" id="PRO_0000160035" description="Superoxide dismutase [Mn]">
    <location>
        <begin position="1"/>
        <end position="27" status="greater than"/>
    </location>
</feature>
<feature type="non-consecutive residues" evidence="2">
    <location>
        <begin position="15"/>
        <end position="16"/>
    </location>
</feature>
<feature type="non-consecutive residues" evidence="2">
    <location>
        <begin position="25"/>
        <end position="26"/>
    </location>
</feature>
<feature type="non-terminal residue">
    <location>
        <position position="27"/>
    </location>
</feature>
<evidence type="ECO:0000250" key="1"/>
<evidence type="ECO:0000305" key="2"/>
<protein>
    <recommendedName>
        <fullName>Superoxide dismutase [Mn]</fullName>
        <ecNumber>1.15.1.1</ecNumber>
    </recommendedName>
</protein>
<sequence length="27" mass="2983">SIFVLPDLPYAKDALPKISAKTFDFGK</sequence>